<sequence length="640" mass="70503">MAVGLINGRLAADEEARAEVDVLNSRLEKTSQLTKKIQACLARLDATGKSVRDVAGPLSGETRKLQVLGNNIDAVIAAIEKLRSPADSKNDEEQIIRMGPEKAGLPNYLASIKRLNKALNDMKASNLRSTQQTVADLQRLVKTGNSQLESSFDKLLRSETPRAIEPLHYLTKNMPFPVLSQEKITRLGLMNSYLTGVHQQNTGAGSSQESPVIKIYAEVRAQYLLSTLGNLATASTNTAKKKTPEAVYKAGTNGMGTYAQAMEGLFLAEYDNICSIFMREDWGPVFQATCQPALVELGRTLRELNSHIKSHITTDCYLAYEIVEIISSLSSNLENRTGELKSSLAAALKPIRETAKSSLVDLLEETKRQVNSLQTLPADGAPTPLATQTMQRLQSMVNFLRPISSIMISIGDGGWKSAAASKGGATDTIPSLVSFDVGADGQEIFAHYCADTIETLLSSLDARARVLYQQKKAVIGVFLANNVTVIERMINESGLVTLLQSRLQVLDVWRKKATALYTETCKEISIHLFDTVHTNRTARPGSGQGMVSSASIMKGLSSKDKEKIKGMFTAFNSGFEDMVARHKQFTMEKEVRQMLAQDVQHMLEPLYNRFWDRYHEIDKGKGKYVKYDKGSIAAVFRSLY</sequence>
<comment type="function">
    <text evidence="1">Involved in the secretory pathway as part of the exocyst complex which tethers secretory vesicles to the sites of exocytosis. Also plays a role in the assembly of the exocyst (By similarity).</text>
</comment>
<comment type="subcellular location">
    <subcellularLocation>
        <location evidence="1">Bud</location>
    </subcellularLocation>
    <subcellularLocation>
        <location evidence="1">Bud neck</location>
    </subcellularLocation>
</comment>
<comment type="similarity">
    <text evidence="2">Belongs to the EXO70 family.</text>
</comment>
<comment type="sequence caution" evidence="2">
    <conflict type="erroneous gene model prediction">
        <sequence resource="EMBL-CDS" id="CAE85518"/>
    </conflict>
</comment>
<gene>
    <name type="primary">exo70</name>
    <name type="ORF">B2N18.170</name>
    <name type="ORF">NCU08012</name>
</gene>
<proteinExistence type="inferred from homology"/>
<reference key="1">
    <citation type="journal article" date="2003" name="Nucleic Acids Res.">
        <title>What's in the genome of a filamentous fungus? Analysis of the Neurospora genome sequence.</title>
        <authorList>
            <person name="Mannhaupt G."/>
            <person name="Montrone C."/>
            <person name="Haase D."/>
            <person name="Mewes H.-W."/>
            <person name="Aign V."/>
            <person name="Hoheisel J.D."/>
            <person name="Fartmann B."/>
            <person name="Nyakatura G."/>
            <person name="Kempken F."/>
            <person name="Maier J."/>
            <person name="Schulte U."/>
        </authorList>
    </citation>
    <scope>NUCLEOTIDE SEQUENCE [LARGE SCALE GENOMIC DNA]</scope>
    <source>
        <strain>ATCC 24698 / 74-OR23-1A / CBS 708.71 / DSM 1257 / FGSC 987</strain>
    </source>
</reference>
<reference key="2">
    <citation type="journal article" date="2003" name="Nature">
        <title>The genome sequence of the filamentous fungus Neurospora crassa.</title>
        <authorList>
            <person name="Galagan J.E."/>
            <person name="Calvo S.E."/>
            <person name="Borkovich K.A."/>
            <person name="Selker E.U."/>
            <person name="Read N.D."/>
            <person name="Jaffe D.B."/>
            <person name="FitzHugh W."/>
            <person name="Ma L.-J."/>
            <person name="Smirnov S."/>
            <person name="Purcell S."/>
            <person name="Rehman B."/>
            <person name="Elkins T."/>
            <person name="Engels R."/>
            <person name="Wang S."/>
            <person name="Nielsen C.B."/>
            <person name="Butler J."/>
            <person name="Endrizzi M."/>
            <person name="Qui D."/>
            <person name="Ianakiev P."/>
            <person name="Bell-Pedersen D."/>
            <person name="Nelson M.A."/>
            <person name="Werner-Washburne M."/>
            <person name="Selitrennikoff C.P."/>
            <person name="Kinsey J.A."/>
            <person name="Braun E.L."/>
            <person name="Zelter A."/>
            <person name="Schulte U."/>
            <person name="Kothe G.O."/>
            <person name="Jedd G."/>
            <person name="Mewes H.-W."/>
            <person name="Staben C."/>
            <person name="Marcotte E."/>
            <person name="Greenberg D."/>
            <person name="Roy A."/>
            <person name="Foley K."/>
            <person name="Naylor J."/>
            <person name="Stange-Thomann N."/>
            <person name="Barrett R."/>
            <person name="Gnerre S."/>
            <person name="Kamal M."/>
            <person name="Kamvysselis M."/>
            <person name="Mauceli E.W."/>
            <person name="Bielke C."/>
            <person name="Rudd S."/>
            <person name="Frishman D."/>
            <person name="Krystofova S."/>
            <person name="Rasmussen C."/>
            <person name="Metzenberg R.L."/>
            <person name="Perkins D.D."/>
            <person name="Kroken S."/>
            <person name="Cogoni C."/>
            <person name="Macino G."/>
            <person name="Catcheside D.E.A."/>
            <person name="Li W."/>
            <person name="Pratt R.J."/>
            <person name="Osmani S.A."/>
            <person name="DeSouza C.P.C."/>
            <person name="Glass N.L."/>
            <person name="Orbach M.J."/>
            <person name="Berglund J.A."/>
            <person name="Voelker R."/>
            <person name="Yarden O."/>
            <person name="Plamann M."/>
            <person name="Seiler S."/>
            <person name="Dunlap J.C."/>
            <person name="Radford A."/>
            <person name="Aramayo R."/>
            <person name="Natvig D.O."/>
            <person name="Alex L.A."/>
            <person name="Mannhaupt G."/>
            <person name="Ebbole D.J."/>
            <person name="Freitag M."/>
            <person name="Paulsen I."/>
            <person name="Sachs M.S."/>
            <person name="Lander E.S."/>
            <person name="Nusbaum C."/>
            <person name="Birren B.W."/>
        </authorList>
    </citation>
    <scope>NUCLEOTIDE SEQUENCE [LARGE SCALE GENOMIC DNA]</scope>
    <source>
        <strain>ATCC 24698 / 74-OR23-1A / CBS 708.71 / DSM 1257 / FGSC 987</strain>
    </source>
</reference>
<evidence type="ECO:0000250" key="1"/>
<evidence type="ECO:0000305" key="2"/>
<feature type="chain" id="PRO_0000118972" description="Exocyst complex protein exo70">
    <location>
        <begin position="1"/>
        <end position="640"/>
    </location>
</feature>
<name>EXO70_NEUCR</name>
<organism>
    <name type="scientific">Neurospora crassa (strain ATCC 24698 / 74-OR23-1A / CBS 708.71 / DSM 1257 / FGSC 987)</name>
    <dbReference type="NCBI Taxonomy" id="367110"/>
    <lineage>
        <taxon>Eukaryota</taxon>
        <taxon>Fungi</taxon>
        <taxon>Dikarya</taxon>
        <taxon>Ascomycota</taxon>
        <taxon>Pezizomycotina</taxon>
        <taxon>Sordariomycetes</taxon>
        <taxon>Sordariomycetidae</taxon>
        <taxon>Sordariales</taxon>
        <taxon>Sordariaceae</taxon>
        <taxon>Neurospora</taxon>
    </lineage>
</organism>
<protein>
    <recommendedName>
        <fullName>Exocyst complex protein exo70</fullName>
    </recommendedName>
</protein>
<keyword id="KW-0268">Exocytosis</keyword>
<keyword id="KW-0653">Protein transport</keyword>
<keyword id="KW-1185">Reference proteome</keyword>
<keyword id="KW-0813">Transport</keyword>
<accession>Q6MFS1</accession>
<accession>Q7SAM9</accession>
<dbReference type="EMBL" id="BX897674">
    <property type="protein sequence ID" value="CAE85518.1"/>
    <property type="status" value="ALT_SEQ"/>
    <property type="molecule type" value="Genomic_DNA"/>
</dbReference>
<dbReference type="EMBL" id="CM002239">
    <property type="protein sequence ID" value="EAA33446.3"/>
    <property type="molecule type" value="Genomic_DNA"/>
</dbReference>
<dbReference type="RefSeq" id="XP_962682.3">
    <property type="nucleotide sequence ID" value="XM_957589.3"/>
</dbReference>
<dbReference type="SMR" id="Q6MFS1"/>
<dbReference type="FunCoup" id="Q6MFS1">
    <property type="interactions" value="122"/>
</dbReference>
<dbReference type="STRING" id="367110.Q6MFS1"/>
<dbReference type="PaxDb" id="5141-EFNCRP00000008266"/>
<dbReference type="EnsemblFungi" id="EAA33446">
    <property type="protein sequence ID" value="EAA33446"/>
    <property type="gene ID" value="NCU08012"/>
</dbReference>
<dbReference type="GeneID" id="3878846"/>
<dbReference type="KEGG" id="ncr:NCU08012"/>
<dbReference type="VEuPathDB" id="FungiDB:NCU08012"/>
<dbReference type="HOGENOM" id="CLU_010236_4_2_1"/>
<dbReference type="InParanoid" id="Q6MFS1"/>
<dbReference type="OrthoDB" id="1922221at2759"/>
<dbReference type="Proteomes" id="UP000001805">
    <property type="component" value="Chromosome 4, Linkage Group IV"/>
</dbReference>
<dbReference type="GO" id="GO:0005935">
    <property type="term" value="C:cellular bud neck"/>
    <property type="evidence" value="ECO:0007669"/>
    <property type="project" value="UniProtKB-SubCell"/>
</dbReference>
<dbReference type="GO" id="GO:0000145">
    <property type="term" value="C:exocyst"/>
    <property type="evidence" value="ECO:0000318"/>
    <property type="project" value="GO_Central"/>
</dbReference>
<dbReference type="GO" id="GO:0005546">
    <property type="term" value="F:phosphatidylinositol-4,5-bisphosphate binding"/>
    <property type="evidence" value="ECO:0007669"/>
    <property type="project" value="InterPro"/>
</dbReference>
<dbReference type="GO" id="GO:0006887">
    <property type="term" value="P:exocytosis"/>
    <property type="evidence" value="ECO:0000318"/>
    <property type="project" value="GO_Central"/>
</dbReference>
<dbReference type="GO" id="GO:0015031">
    <property type="term" value="P:protein transport"/>
    <property type="evidence" value="ECO:0007669"/>
    <property type="project" value="UniProtKB-KW"/>
</dbReference>
<dbReference type="Gene3D" id="1.20.1280.170">
    <property type="entry name" value="Exocyst complex component Exo70"/>
    <property type="match status" value="1"/>
</dbReference>
<dbReference type="InterPro" id="IPR016159">
    <property type="entry name" value="Cullin_repeat-like_dom_sf"/>
</dbReference>
<dbReference type="InterPro" id="IPR004140">
    <property type="entry name" value="Exo70"/>
</dbReference>
<dbReference type="InterPro" id="IPR046364">
    <property type="entry name" value="Exo70_C"/>
</dbReference>
<dbReference type="PANTHER" id="PTHR12542:SF41">
    <property type="entry name" value="EXOCYST COMPLEX COMPONENT 7"/>
    <property type="match status" value="1"/>
</dbReference>
<dbReference type="PANTHER" id="PTHR12542">
    <property type="entry name" value="EXOCYST COMPLEX PROTEIN EXO70"/>
    <property type="match status" value="1"/>
</dbReference>
<dbReference type="Pfam" id="PF03081">
    <property type="entry name" value="Exo70_C"/>
    <property type="match status" value="1"/>
</dbReference>
<dbReference type="Pfam" id="PF20669">
    <property type="entry name" value="Exo70_N"/>
    <property type="match status" value="1"/>
</dbReference>
<dbReference type="SUPFAM" id="SSF74788">
    <property type="entry name" value="Cullin repeat-like"/>
    <property type="match status" value="1"/>
</dbReference>